<accession>Q89AG9</accession>
<organism>
    <name type="scientific">Buchnera aphidicola subsp. Baizongia pistaciae (strain Bp)</name>
    <dbReference type="NCBI Taxonomy" id="224915"/>
    <lineage>
        <taxon>Bacteria</taxon>
        <taxon>Pseudomonadati</taxon>
        <taxon>Pseudomonadota</taxon>
        <taxon>Gammaproteobacteria</taxon>
        <taxon>Enterobacterales</taxon>
        <taxon>Erwiniaceae</taxon>
        <taxon>Buchnera</taxon>
    </lineage>
</organism>
<proteinExistence type="inferred from homology"/>
<keyword id="KW-0106">Calcium</keyword>
<keyword id="KW-0275">Fatty acid biosynthesis</keyword>
<keyword id="KW-0276">Fatty acid metabolism</keyword>
<keyword id="KW-0444">Lipid biosynthesis</keyword>
<keyword id="KW-0443">Lipid metabolism</keyword>
<keyword id="KW-0479">Metal-binding</keyword>
<keyword id="KW-0521">NADP</keyword>
<keyword id="KW-0560">Oxidoreductase</keyword>
<keyword id="KW-1185">Reference proteome</keyword>
<name>FABG_BUCBP</name>
<feature type="chain" id="PRO_0000054668" description="3-oxoacyl-[acyl-carrier-protein] reductase FabG">
    <location>
        <begin position="1"/>
        <end position="245"/>
    </location>
</feature>
<feature type="active site" description="Proton acceptor" evidence="2">
    <location>
        <position position="152"/>
    </location>
</feature>
<feature type="binding site" evidence="1">
    <location>
        <begin position="12"/>
        <end position="15"/>
    </location>
    <ligand>
        <name>NADP(+)</name>
        <dbReference type="ChEBI" id="CHEBI:58349"/>
    </ligand>
</feature>
<feature type="binding site" evidence="1">
    <location>
        <position position="38"/>
    </location>
    <ligand>
        <name>NADP(+)</name>
        <dbReference type="ChEBI" id="CHEBI:58349"/>
    </ligand>
</feature>
<feature type="binding site" evidence="1">
    <location>
        <position position="51"/>
    </location>
    <ligand>
        <name>Ca(2+)</name>
        <dbReference type="ChEBI" id="CHEBI:29108"/>
        <label>1</label>
        <note>ligand shared between dimeric partners</note>
    </ligand>
</feature>
<feature type="binding site" evidence="1">
    <location>
        <position position="54"/>
    </location>
    <ligand>
        <name>Ca(2+)</name>
        <dbReference type="ChEBI" id="CHEBI:29108"/>
        <label>1</label>
        <note>ligand shared between dimeric partners</note>
    </ligand>
</feature>
<feature type="binding site" evidence="1">
    <location>
        <begin position="60"/>
        <end position="61"/>
    </location>
    <ligand>
        <name>NADP(+)</name>
        <dbReference type="ChEBI" id="CHEBI:58349"/>
    </ligand>
</feature>
<feature type="binding site" evidence="1">
    <location>
        <position position="87"/>
    </location>
    <ligand>
        <name>NADP(+)</name>
        <dbReference type="ChEBI" id="CHEBI:58349"/>
    </ligand>
</feature>
<feature type="binding site" evidence="1">
    <location>
        <position position="139"/>
    </location>
    <ligand>
        <name>substrate</name>
    </ligand>
</feature>
<feature type="binding site" evidence="1">
    <location>
        <position position="146"/>
    </location>
    <ligand>
        <name>Ca(2+)</name>
        <dbReference type="ChEBI" id="CHEBI:29108"/>
        <label>2</label>
    </ligand>
</feature>
<feature type="binding site" evidence="1">
    <location>
        <begin position="152"/>
        <end position="156"/>
    </location>
    <ligand>
        <name>NADP(+)</name>
        <dbReference type="ChEBI" id="CHEBI:58349"/>
    </ligand>
</feature>
<feature type="binding site" evidence="1">
    <location>
        <position position="185"/>
    </location>
    <ligand>
        <name>NADP(+)</name>
        <dbReference type="ChEBI" id="CHEBI:58349"/>
    </ligand>
</feature>
<feature type="binding site" evidence="1">
    <location>
        <position position="234"/>
    </location>
    <ligand>
        <name>Ca(2+)</name>
        <dbReference type="ChEBI" id="CHEBI:29108"/>
        <label>3</label>
        <note>ligand shared between dimeric partners</note>
    </ligand>
</feature>
<feature type="binding site" evidence="1">
    <location>
        <position position="235"/>
    </location>
    <ligand>
        <name>Ca(2+)</name>
        <dbReference type="ChEBI" id="CHEBI:29108"/>
        <label>3</label>
        <note>ligand shared between dimeric partners</note>
    </ligand>
</feature>
<evidence type="ECO:0000250" key="1"/>
<evidence type="ECO:0000255" key="2">
    <source>
        <dbReference type="PROSITE-ProRule" id="PRU10001"/>
    </source>
</evidence>
<evidence type="ECO:0000305" key="3"/>
<dbReference type="EC" id="1.1.1.100"/>
<dbReference type="EMBL" id="AE016826">
    <property type="protein sequence ID" value="AAO27043.1"/>
    <property type="molecule type" value="Genomic_DNA"/>
</dbReference>
<dbReference type="RefSeq" id="WP_011091444.1">
    <property type="nucleotide sequence ID" value="NC_004545.1"/>
</dbReference>
<dbReference type="SMR" id="Q89AG9"/>
<dbReference type="STRING" id="224915.bbp_321"/>
<dbReference type="KEGG" id="bab:bbp_321"/>
<dbReference type="eggNOG" id="COG1028">
    <property type="taxonomic scope" value="Bacteria"/>
</dbReference>
<dbReference type="HOGENOM" id="CLU_010194_1_3_6"/>
<dbReference type="OrthoDB" id="9804774at2"/>
<dbReference type="UniPathway" id="UPA00094"/>
<dbReference type="Proteomes" id="UP000000601">
    <property type="component" value="Chromosome"/>
</dbReference>
<dbReference type="GO" id="GO:0004316">
    <property type="term" value="F:3-oxoacyl-[acyl-carrier-protein] reductase (NADPH) activity"/>
    <property type="evidence" value="ECO:0007669"/>
    <property type="project" value="UniProtKB-EC"/>
</dbReference>
<dbReference type="GO" id="GO:0046872">
    <property type="term" value="F:metal ion binding"/>
    <property type="evidence" value="ECO:0007669"/>
    <property type="project" value="UniProtKB-KW"/>
</dbReference>
<dbReference type="GO" id="GO:0006633">
    <property type="term" value="P:fatty acid biosynthetic process"/>
    <property type="evidence" value="ECO:0007669"/>
    <property type="project" value="UniProtKB-UniPathway"/>
</dbReference>
<dbReference type="CDD" id="cd05333">
    <property type="entry name" value="BKR_SDR_c"/>
    <property type="match status" value="1"/>
</dbReference>
<dbReference type="FunFam" id="3.40.50.720:FF:000173">
    <property type="entry name" value="3-oxoacyl-[acyl-carrier protein] reductase"/>
    <property type="match status" value="1"/>
</dbReference>
<dbReference type="Gene3D" id="3.40.50.720">
    <property type="entry name" value="NAD(P)-binding Rossmann-like Domain"/>
    <property type="match status" value="1"/>
</dbReference>
<dbReference type="InterPro" id="IPR036291">
    <property type="entry name" value="NAD(P)-bd_dom_sf"/>
</dbReference>
<dbReference type="InterPro" id="IPR020904">
    <property type="entry name" value="Sc_DH/Rdtase_CS"/>
</dbReference>
<dbReference type="InterPro" id="IPR050259">
    <property type="entry name" value="SDR"/>
</dbReference>
<dbReference type="InterPro" id="IPR002347">
    <property type="entry name" value="SDR_fam"/>
</dbReference>
<dbReference type="NCBIfam" id="NF009466">
    <property type="entry name" value="PRK12826.1-2"/>
    <property type="match status" value="1"/>
</dbReference>
<dbReference type="PANTHER" id="PTHR42879">
    <property type="entry name" value="3-OXOACYL-(ACYL-CARRIER-PROTEIN) REDUCTASE"/>
    <property type="match status" value="1"/>
</dbReference>
<dbReference type="PANTHER" id="PTHR42879:SF2">
    <property type="entry name" value="3-OXOACYL-[ACYL-CARRIER-PROTEIN] REDUCTASE FABG"/>
    <property type="match status" value="1"/>
</dbReference>
<dbReference type="Pfam" id="PF13561">
    <property type="entry name" value="adh_short_C2"/>
    <property type="match status" value="1"/>
</dbReference>
<dbReference type="PRINTS" id="PR00081">
    <property type="entry name" value="GDHRDH"/>
</dbReference>
<dbReference type="PRINTS" id="PR00080">
    <property type="entry name" value="SDRFAMILY"/>
</dbReference>
<dbReference type="SUPFAM" id="SSF51735">
    <property type="entry name" value="NAD(P)-binding Rossmann-fold domains"/>
    <property type="match status" value="1"/>
</dbReference>
<dbReference type="PROSITE" id="PS00061">
    <property type="entry name" value="ADH_SHORT"/>
    <property type="match status" value="1"/>
</dbReference>
<protein>
    <recommendedName>
        <fullName>3-oxoacyl-[acyl-carrier-protein] reductase FabG</fullName>
        <ecNumber>1.1.1.100</ecNumber>
    </recommendedName>
    <alternativeName>
        <fullName>3-ketoacyl-acyl carrier protein reductase</fullName>
    </alternativeName>
    <alternativeName>
        <fullName>Beta-Ketoacyl-acyl carrier protein reductase</fullName>
    </alternativeName>
    <alternativeName>
        <fullName>Beta-ketoacyl-ACP reductase</fullName>
    </alternativeName>
</protein>
<gene>
    <name type="primary">fabG</name>
    <name type="ordered locus">bbp_321</name>
</gene>
<comment type="function">
    <text evidence="1">Catalyzes the NADPH-dependent reduction of beta-ketoacyl-ACP substrates to beta-hydroxyacyl-ACP products, the first reductive step in the elongation cycle of fatty acid biosynthesis.</text>
</comment>
<comment type="catalytic activity">
    <reaction>
        <text>a (3R)-hydroxyacyl-[ACP] + NADP(+) = a 3-oxoacyl-[ACP] + NADPH + H(+)</text>
        <dbReference type="Rhea" id="RHEA:17397"/>
        <dbReference type="Rhea" id="RHEA-COMP:9916"/>
        <dbReference type="Rhea" id="RHEA-COMP:9945"/>
        <dbReference type="ChEBI" id="CHEBI:15378"/>
        <dbReference type="ChEBI" id="CHEBI:57783"/>
        <dbReference type="ChEBI" id="CHEBI:58349"/>
        <dbReference type="ChEBI" id="CHEBI:78776"/>
        <dbReference type="ChEBI" id="CHEBI:78827"/>
        <dbReference type="EC" id="1.1.1.100"/>
    </reaction>
</comment>
<comment type="pathway">
    <text>Lipid metabolism; fatty acid biosynthesis.</text>
</comment>
<comment type="subunit">
    <text evidence="1">Homotetramer.</text>
</comment>
<comment type="miscellaneous">
    <text evidence="1">Calcium ions stabilize the structure, and may inhibit FabG activity by obstructing access to the active site.</text>
</comment>
<comment type="similarity">
    <text evidence="3">Belongs to the short-chain dehydrogenases/reductases (SDR) family.</text>
</comment>
<reference key="1">
    <citation type="journal article" date="2003" name="Proc. Natl. Acad. Sci. U.S.A.">
        <title>Reductive genome evolution in Buchnera aphidicola.</title>
        <authorList>
            <person name="van Ham R.C.H.J."/>
            <person name="Kamerbeek J."/>
            <person name="Palacios C."/>
            <person name="Rausell C."/>
            <person name="Abascal F."/>
            <person name="Bastolla U."/>
            <person name="Fernandez J.M."/>
            <person name="Jimenez L."/>
            <person name="Postigo M."/>
            <person name="Silva F.J."/>
            <person name="Tamames J."/>
            <person name="Viguera E."/>
            <person name="Latorre A."/>
            <person name="Valencia A."/>
            <person name="Moran F."/>
            <person name="Moya A."/>
        </authorList>
    </citation>
    <scope>NUCLEOTIDE SEQUENCE [LARGE SCALE GENOMIC DNA]</scope>
    <source>
        <strain>Bp</strain>
    </source>
</reference>
<sequence>MKTTKKIAVITGANRGLGKGIAEELSNTNNITVIGTSTSQKGCKIINKYLKNNGIGIKLDITNPNEITKTMDFVYKNFGRVDILINNAGIIRDKLLINMKTQDWNSVLNVNLNSIFYMSKSVIRNMIKNKQGKIITIGSVIAHIGNCGQTNYSAAKLGLVGFHKSLALELAPKGITVNMIAPGLIKTGMTNNLSQKQLSKYLSKIPMKRLGTIKEISKITLFLISNDANYITGQVIHVNGGMYMP</sequence>